<evidence type="ECO:0000255" key="1"/>
<evidence type="ECO:0000305" key="2"/>
<dbReference type="EMBL" id="Z49394">
    <property type="protein sequence ID" value="CAA89414.1"/>
    <property type="molecule type" value="Genomic_DNA"/>
</dbReference>
<dbReference type="EMBL" id="BK006943">
    <property type="protein sequence ID" value="DAA08682.1"/>
    <property type="molecule type" value="Genomic_DNA"/>
</dbReference>
<dbReference type="PIR" id="S56899">
    <property type="entry name" value="S56899"/>
</dbReference>
<dbReference type="RefSeq" id="NP_012417.1">
    <property type="nucleotide sequence ID" value="NM_001181551.1"/>
</dbReference>
<dbReference type="SMR" id="P47022"/>
<dbReference type="BioGRID" id="33636">
    <property type="interactions" value="48"/>
</dbReference>
<dbReference type="FunCoup" id="P47022">
    <property type="interactions" value="44"/>
</dbReference>
<dbReference type="IntAct" id="P47022">
    <property type="interactions" value="2"/>
</dbReference>
<dbReference type="MINT" id="P47022"/>
<dbReference type="STRING" id="4932.YJL118W"/>
<dbReference type="PaxDb" id="4932-YJL118W"/>
<dbReference type="EnsemblFungi" id="YJL118W_mRNA">
    <property type="protein sequence ID" value="YJL118W"/>
    <property type="gene ID" value="YJL118W"/>
</dbReference>
<dbReference type="GeneID" id="853323"/>
<dbReference type="KEGG" id="sce:YJL118W"/>
<dbReference type="AGR" id="SGD:S000003654"/>
<dbReference type="SGD" id="S000003654">
    <property type="gene designation" value="YJL118W"/>
</dbReference>
<dbReference type="VEuPathDB" id="FungiDB:YJL118W"/>
<dbReference type="HOGENOM" id="CLU_1469014_0_0_1"/>
<dbReference type="InParanoid" id="P47022"/>
<dbReference type="OMA" id="PIMEIQM"/>
<dbReference type="OrthoDB" id="4059837at2759"/>
<dbReference type="BioCyc" id="YEAST:G3O-31572-MONOMER"/>
<dbReference type="BioGRID-ORCS" id="853323">
    <property type="hits" value="1 hit in 10 CRISPR screens"/>
</dbReference>
<dbReference type="PRO" id="PR:P47022"/>
<dbReference type="Proteomes" id="UP000002311">
    <property type="component" value="Chromosome X"/>
</dbReference>
<dbReference type="RNAct" id="P47022">
    <property type="molecule type" value="protein"/>
</dbReference>
<dbReference type="GO" id="GO:0016020">
    <property type="term" value="C:membrane"/>
    <property type="evidence" value="ECO:0007669"/>
    <property type="project" value="UniProtKB-SubCell"/>
</dbReference>
<organism>
    <name type="scientific">Saccharomyces cerevisiae (strain ATCC 204508 / S288c)</name>
    <name type="common">Baker's yeast</name>
    <dbReference type="NCBI Taxonomy" id="559292"/>
    <lineage>
        <taxon>Eukaryota</taxon>
        <taxon>Fungi</taxon>
        <taxon>Dikarya</taxon>
        <taxon>Ascomycota</taxon>
        <taxon>Saccharomycotina</taxon>
        <taxon>Saccharomycetes</taxon>
        <taxon>Saccharomycetales</taxon>
        <taxon>Saccharomycetaceae</taxon>
        <taxon>Saccharomyces</taxon>
    </lineage>
</organism>
<name>YJL8_YEAST</name>
<comment type="subcellular location">
    <subcellularLocation>
        <location evidence="2">Membrane</location>
        <topology evidence="2">Multi-pass membrane protein</topology>
    </subcellularLocation>
</comment>
<gene>
    <name type="ordered locus">YJL118W</name>
    <name type="ORF">J0742</name>
</gene>
<accession>P47022</accession>
<accession>D6VW66</accession>
<reference key="1">
    <citation type="journal article" date="1996" name="Yeast">
        <title>Sequencing analysis of a 40.2 kb fragment of yeast chromosome X reveals 19 open reading frames including URA2 (5' end), TRK1, PBS2, SPT10, GCD14, RPE1, PHO86, NCA3, ASF1, CCT7, GZF3, two tRNA genes, three remnant delta elements and a Ty4 transposon.</title>
        <authorList>
            <person name="Cziepluch C."/>
            <person name="Kordes E."/>
            <person name="Pujol A."/>
            <person name="Jauniaux J.-C."/>
        </authorList>
    </citation>
    <scope>NUCLEOTIDE SEQUENCE [GENOMIC DNA]</scope>
    <source>
        <strain>ATCC 96604 / S288c / FY1679</strain>
    </source>
</reference>
<reference key="2">
    <citation type="journal article" date="1996" name="EMBO J.">
        <title>Complete nucleotide sequence of Saccharomyces cerevisiae chromosome X.</title>
        <authorList>
            <person name="Galibert F."/>
            <person name="Alexandraki D."/>
            <person name="Baur A."/>
            <person name="Boles E."/>
            <person name="Chalwatzis N."/>
            <person name="Chuat J.-C."/>
            <person name="Coster F."/>
            <person name="Cziepluch C."/>
            <person name="de Haan M."/>
            <person name="Domdey H."/>
            <person name="Durand P."/>
            <person name="Entian K.-D."/>
            <person name="Gatius M."/>
            <person name="Goffeau A."/>
            <person name="Grivell L.A."/>
            <person name="Hennemann A."/>
            <person name="Herbert C.J."/>
            <person name="Heumann K."/>
            <person name="Hilger F."/>
            <person name="Hollenberg C.P."/>
            <person name="Huang M.-E."/>
            <person name="Jacq C."/>
            <person name="Jauniaux J.-C."/>
            <person name="Katsoulou C."/>
            <person name="Kirchrath L."/>
            <person name="Kleine K."/>
            <person name="Kordes E."/>
            <person name="Koetter P."/>
            <person name="Liebl S."/>
            <person name="Louis E.J."/>
            <person name="Manus V."/>
            <person name="Mewes H.-W."/>
            <person name="Miosga T."/>
            <person name="Obermaier B."/>
            <person name="Perea J."/>
            <person name="Pohl T.M."/>
            <person name="Portetelle D."/>
            <person name="Pujol A."/>
            <person name="Purnelle B."/>
            <person name="Ramezani Rad M."/>
            <person name="Rasmussen S.W."/>
            <person name="Rose M."/>
            <person name="Rossau R."/>
            <person name="Schaaff-Gerstenschlaeger I."/>
            <person name="Smits P.H.M."/>
            <person name="Scarcez T."/>
            <person name="Soriano N."/>
            <person name="To Van D."/>
            <person name="Tzermia M."/>
            <person name="Van Broekhoven A."/>
            <person name="Vandenbol M."/>
            <person name="Wedler H."/>
            <person name="von Wettstein D."/>
            <person name="Wambutt R."/>
            <person name="Zagulski M."/>
            <person name="Zollner A."/>
            <person name="Karpfinger-Hartl L."/>
        </authorList>
    </citation>
    <scope>NUCLEOTIDE SEQUENCE [LARGE SCALE GENOMIC DNA]</scope>
    <source>
        <strain>ATCC 204508 / S288c</strain>
    </source>
</reference>
<reference key="3">
    <citation type="journal article" date="2014" name="G3 (Bethesda)">
        <title>The reference genome sequence of Saccharomyces cerevisiae: Then and now.</title>
        <authorList>
            <person name="Engel S.R."/>
            <person name="Dietrich F.S."/>
            <person name="Fisk D.G."/>
            <person name="Binkley G."/>
            <person name="Balakrishnan R."/>
            <person name="Costanzo M.C."/>
            <person name="Dwight S.S."/>
            <person name="Hitz B.C."/>
            <person name="Karra K."/>
            <person name="Nash R.S."/>
            <person name="Weng S."/>
            <person name="Wong E.D."/>
            <person name="Lloyd P."/>
            <person name="Skrzypek M.S."/>
            <person name="Miyasato S.R."/>
            <person name="Simison M."/>
            <person name="Cherry J.M."/>
        </authorList>
    </citation>
    <scope>GENOME REANNOTATION</scope>
    <source>
        <strain>ATCC 204508 / S288c</strain>
    </source>
</reference>
<feature type="chain" id="PRO_0000203044" description="Uncharacterized protein YJL118W">
    <location>
        <begin position="1"/>
        <end position="219"/>
    </location>
</feature>
<feature type="transmembrane region" description="Helical" evidence="1">
    <location>
        <begin position="81"/>
        <end position="101"/>
    </location>
</feature>
<feature type="transmembrane region" description="Helical" evidence="1">
    <location>
        <begin position="168"/>
        <end position="188"/>
    </location>
</feature>
<protein>
    <recommendedName>
        <fullName>Uncharacterized protein YJL118W</fullName>
    </recommendedName>
</protein>
<keyword id="KW-0472">Membrane</keyword>
<keyword id="KW-1185">Reference proteome</keyword>
<keyword id="KW-0812">Transmembrane</keyword>
<keyword id="KW-1133">Transmembrane helix</keyword>
<sequence>MASCFSVSLLARVAVVEPIRVQLWLNVVNCMIESSMHQCPPRDRHFFSSSRPILLIRRSVSTVYRFVASRTTQVLRAAKTVVKWFIIVDPLINSILINYLIDRLCTLGHAVLRVKKRKTEERQPCSPIIQHTHVKRRKRPRLRIVAIKRKRRRRRPHRIERPLSNMYPIMEIQMVAVPLALPSPTALVHYQQQQQQLPQHHPWYDLSLSEEALSTCCCS</sequence>
<proteinExistence type="predicted"/>